<comment type="function">
    <text evidence="1">Catalyzes the ATP-dependent phosphorylation of N-acetyl-L-glutamate.</text>
</comment>
<comment type="catalytic activity">
    <reaction evidence="1">
        <text>N-acetyl-L-glutamate + ATP = N-acetyl-L-glutamyl 5-phosphate + ADP</text>
        <dbReference type="Rhea" id="RHEA:14629"/>
        <dbReference type="ChEBI" id="CHEBI:30616"/>
        <dbReference type="ChEBI" id="CHEBI:44337"/>
        <dbReference type="ChEBI" id="CHEBI:57936"/>
        <dbReference type="ChEBI" id="CHEBI:456216"/>
        <dbReference type="EC" id="2.7.2.8"/>
    </reaction>
</comment>
<comment type="pathway">
    <text evidence="1">Amino-acid biosynthesis; L-arginine biosynthesis; N(2)-acetyl-L-ornithine from L-glutamate: step 2/4.</text>
</comment>
<comment type="subcellular location">
    <subcellularLocation>
        <location evidence="1">Cytoplasm</location>
    </subcellularLocation>
</comment>
<comment type="similarity">
    <text evidence="1">Belongs to the acetylglutamate kinase family. ArgB subfamily.</text>
</comment>
<sequence length="289" mass="31237">MKKEQVLIEALPYIREFYDSIMVIKIGGSIMTNHEILENFIQDIILLKYIGIHPVVVHGGGPEISETMKRLGKKAEFVAGLRVTDRETLEIARMVLLGNINAELVSLIGKHGGKGIGLSGKDGMLIVARKKPPMNVNGENVDLGYVGEVEEINPEILMITAGKGYIPVISPIAIDRDGNSLNVNADTVAGAVAVALRAKKLISITDVEGVREDPDDPGRVISQFSPSEFQRLVERGIIKGGMIPKVEACVRAVERGVEKAHIIDGRIPHAIILELLTDAGIGTMISNIT</sequence>
<accession>A0B9X4</accession>
<proteinExistence type="inferred from homology"/>
<protein>
    <recommendedName>
        <fullName evidence="1">Acetylglutamate kinase</fullName>
        <ecNumber evidence="1">2.7.2.8</ecNumber>
    </recommendedName>
    <alternativeName>
        <fullName evidence="1">N-acetyl-L-glutamate 5-phosphotransferase</fullName>
    </alternativeName>
    <alternativeName>
        <fullName evidence="1">NAG kinase</fullName>
        <shortName evidence="1">NAGK</shortName>
    </alternativeName>
</protein>
<evidence type="ECO:0000255" key="1">
    <source>
        <dbReference type="HAMAP-Rule" id="MF_00082"/>
    </source>
</evidence>
<dbReference type="EC" id="2.7.2.8" evidence="1"/>
<dbReference type="EMBL" id="CP000477">
    <property type="protein sequence ID" value="ABK15498.1"/>
    <property type="molecule type" value="Genomic_DNA"/>
</dbReference>
<dbReference type="RefSeq" id="WP_011696876.1">
    <property type="nucleotide sequence ID" value="NC_008553.1"/>
</dbReference>
<dbReference type="SMR" id="A0B9X4"/>
<dbReference type="STRING" id="349307.Mthe_1732"/>
<dbReference type="GeneID" id="4462925"/>
<dbReference type="KEGG" id="mtp:Mthe_1732"/>
<dbReference type="HOGENOM" id="CLU_053680_0_0_2"/>
<dbReference type="OrthoDB" id="6816at2157"/>
<dbReference type="UniPathway" id="UPA00068">
    <property type="reaction ID" value="UER00107"/>
</dbReference>
<dbReference type="Proteomes" id="UP000000674">
    <property type="component" value="Chromosome"/>
</dbReference>
<dbReference type="GO" id="GO:0005737">
    <property type="term" value="C:cytoplasm"/>
    <property type="evidence" value="ECO:0007669"/>
    <property type="project" value="UniProtKB-SubCell"/>
</dbReference>
<dbReference type="GO" id="GO:0003991">
    <property type="term" value="F:acetylglutamate kinase activity"/>
    <property type="evidence" value="ECO:0007669"/>
    <property type="project" value="UniProtKB-UniRule"/>
</dbReference>
<dbReference type="GO" id="GO:0005524">
    <property type="term" value="F:ATP binding"/>
    <property type="evidence" value="ECO:0007669"/>
    <property type="project" value="UniProtKB-UniRule"/>
</dbReference>
<dbReference type="GO" id="GO:0042450">
    <property type="term" value="P:arginine biosynthetic process via ornithine"/>
    <property type="evidence" value="ECO:0007669"/>
    <property type="project" value="UniProtKB-UniRule"/>
</dbReference>
<dbReference type="GO" id="GO:0006526">
    <property type="term" value="P:L-arginine biosynthetic process"/>
    <property type="evidence" value="ECO:0007669"/>
    <property type="project" value="UniProtKB-UniPathway"/>
</dbReference>
<dbReference type="CDD" id="cd04250">
    <property type="entry name" value="AAK_NAGK-C"/>
    <property type="match status" value="1"/>
</dbReference>
<dbReference type="FunFam" id="3.40.1160.10:FF:000004">
    <property type="entry name" value="Acetylglutamate kinase"/>
    <property type="match status" value="1"/>
</dbReference>
<dbReference type="Gene3D" id="3.40.1160.10">
    <property type="entry name" value="Acetylglutamate kinase-like"/>
    <property type="match status" value="1"/>
</dbReference>
<dbReference type="HAMAP" id="MF_00082">
    <property type="entry name" value="ArgB"/>
    <property type="match status" value="1"/>
</dbReference>
<dbReference type="InterPro" id="IPR036393">
    <property type="entry name" value="AceGlu_kinase-like_sf"/>
</dbReference>
<dbReference type="InterPro" id="IPR004662">
    <property type="entry name" value="AcgluKinase_fam"/>
</dbReference>
<dbReference type="InterPro" id="IPR037528">
    <property type="entry name" value="ArgB"/>
</dbReference>
<dbReference type="InterPro" id="IPR001048">
    <property type="entry name" value="Asp/Glu/Uridylate_kinase"/>
</dbReference>
<dbReference type="InterPro" id="IPR001057">
    <property type="entry name" value="Glu/AcGlu_kinase"/>
</dbReference>
<dbReference type="InterPro" id="IPR041727">
    <property type="entry name" value="NAGK-C"/>
</dbReference>
<dbReference type="NCBIfam" id="TIGR00761">
    <property type="entry name" value="argB"/>
    <property type="match status" value="1"/>
</dbReference>
<dbReference type="PANTHER" id="PTHR23342">
    <property type="entry name" value="N-ACETYLGLUTAMATE SYNTHASE"/>
    <property type="match status" value="1"/>
</dbReference>
<dbReference type="PANTHER" id="PTHR23342:SF0">
    <property type="entry name" value="N-ACETYLGLUTAMATE SYNTHASE, MITOCHONDRIAL"/>
    <property type="match status" value="1"/>
</dbReference>
<dbReference type="Pfam" id="PF00696">
    <property type="entry name" value="AA_kinase"/>
    <property type="match status" value="1"/>
</dbReference>
<dbReference type="PIRSF" id="PIRSF000728">
    <property type="entry name" value="NAGK"/>
    <property type="match status" value="1"/>
</dbReference>
<dbReference type="PRINTS" id="PR00474">
    <property type="entry name" value="GLU5KINASE"/>
</dbReference>
<dbReference type="SUPFAM" id="SSF53633">
    <property type="entry name" value="Carbamate kinase-like"/>
    <property type="match status" value="1"/>
</dbReference>
<reference key="1">
    <citation type="submission" date="2006-10" db="EMBL/GenBank/DDBJ databases">
        <title>Complete sequence of Methanosaeta thermophila PT.</title>
        <authorList>
            <consortium name="US DOE Joint Genome Institute"/>
            <person name="Copeland A."/>
            <person name="Lucas S."/>
            <person name="Lapidus A."/>
            <person name="Barry K."/>
            <person name="Detter J.C."/>
            <person name="Glavina del Rio T."/>
            <person name="Hammon N."/>
            <person name="Israni S."/>
            <person name="Pitluck S."/>
            <person name="Chain P."/>
            <person name="Malfatti S."/>
            <person name="Shin M."/>
            <person name="Vergez L."/>
            <person name="Schmutz J."/>
            <person name="Larimer F."/>
            <person name="Land M."/>
            <person name="Hauser L."/>
            <person name="Kyrpides N."/>
            <person name="Kim E."/>
            <person name="Smith K.S."/>
            <person name="Ingram-Smith C."/>
            <person name="Richardson P."/>
        </authorList>
    </citation>
    <scope>NUCLEOTIDE SEQUENCE [LARGE SCALE GENOMIC DNA]</scope>
    <source>
        <strain>DSM 6194 / JCM 14653 / NBRC 101360 / PT</strain>
    </source>
</reference>
<gene>
    <name evidence="1" type="primary">argB</name>
    <name type="ordered locus">Mthe_1732</name>
</gene>
<keyword id="KW-0028">Amino-acid biosynthesis</keyword>
<keyword id="KW-0055">Arginine biosynthesis</keyword>
<keyword id="KW-0067">ATP-binding</keyword>
<keyword id="KW-0963">Cytoplasm</keyword>
<keyword id="KW-0418">Kinase</keyword>
<keyword id="KW-0547">Nucleotide-binding</keyword>
<keyword id="KW-1185">Reference proteome</keyword>
<keyword id="KW-0808">Transferase</keyword>
<organism>
    <name type="scientific">Methanothrix thermoacetophila (strain DSM 6194 / JCM 14653 / NBRC 101360 / PT)</name>
    <name type="common">Methanosaeta thermophila</name>
    <dbReference type="NCBI Taxonomy" id="349307"/>
    <lineage>
        <taxon>Archaea</taxon>
        <taxon>Methanobacteriati</taxon>
        <taxon>Methanobacteriota</taxon>
        <taxon>Stenosarchaea group</taxon>
        <taxon>Methanomicrobia</taxon>
        <taxon>Methanotrichales</taxon>
        <taxon>Methanotrichaceae</taxon>
        <taxon>Methanothrix</taxon>
    </lineage>
</organism>
<feature type="chain" id="PRO_1000075313" description="Acetylglutamate kinase">
    <location>
        <begin position="1"/>
        <end position="289"/>
    </location>
</feature>
<feature type="binding site" evidence="1">
    <location>
        <begin position="60"/>
        <end position="61"/>
    </location>
    <ligand>
        <name>substrate</name>
    </ligand>
</feature>
<feature type="binding site" evidence="1">
    <location>
        <position position="82"/>
    </location>
    <ligand>
        <name>substrate</name>
    </ligand>
</feature>
<feature type="binding site" evidence="1">
    <location>
        <position position="182"/>
    </location>
    <ligand>
        <name>substrate</name>
    </ligand>
</feature>
<feature type="site" description="Transition state stabilizer" evidence="1">
    <location>
        <position position="25"/>
    </location>
</feature>
<feature type="site" description="Transition state stabilizer" evidence="1">
    <location>
        <position position="245"/>
    </location>
</feature>
<name>ARGB_METTP</name>